<reference key="1">
    <citation type="submission" date="2001-02" db="EMBL/GenBank/DDBJ databases">
        <title>SWAN, a multidomain nuclear protein in mammalian species.</title>
        <authorList>
            <person name="Huang C.-H."/>
        </authorList>
    </citation>
    <scope>NUCLEOTIDE SEQUENCE [MRNA]</scope>
</reference>
<sequence length="932" mass="97383">MAVVIRLQGLPIVAGTMDIRHFFSGLTIPDGGVHIVGGELGEAFIVFATDEDARLGMMRTGGTIKGSKVTLLLSSKTEMQNMIELSRRRFETANLDIPPANASRSGPPPSSGMSGRVNLPTTVSNFNNPSPSVVTATTSVHESNKNIQTFSTASIGTAPPNMGASFGSPTFSSTVPSTASPMNTVPPPPIPPIPAMPSLPPMPSIPPIPVPPPVPTLPPVPPVPPIPPVPSVPPMTPLPPMSGMPPLNPPPVAPLPAGMNGSGAPMNLNNNLNPMFLGPLNPVNPIQMNSQSSVKPLPINPDDLYVSVHGMPFSAMENDVRDFFHGLRVDAVHLLKDHVGRNNGNGLVKFLSPQDTFEALKRNRMLMIQRYVEVSPATERQWVAAGGHITFKQNMGPSGQSHPPPQTLPRSKSPSGQKRSRSRSPHEAGFCVYLKGLPFEAENKHVIDFFKKLDIVEDSIYIAYGPNGKATGEGFVEFRNEADYKAALCRHKQYMGNRFIQVHPITKKGMLEKIDMIRKRLQNFSYDQREMMLNPEGDVNSAKVCAHITNIPFSITKMDVLQFLEGIPVDENAVHVLVDNNGQGLGQALVQFKNEDDARKSERLHRKKLNGREAFVHVVTLEDMREIEKNPPAQGKKGLKMPVPGNPAVPGMPNAGLPGVGLPSAGLPGAGLPSTGLPGSAITSAGLPGAGMPSAGIPSAGGEEHAFLTVGSKEANNGPPFNFPGNFGGSNAFGPPIPPPGLGGGAFGDARPGMPSVGNSGLPGLGLDVPGFGGGPNNLSGPSGFGGGPQNFGNGPGSLGGPPGFGSGPPGLGSAPGHLGGPPAFGPGPGPGPGPGPIHIGGPPGFASSSGKPGPTVIKVQNMPFTVSIDEILDFFYGYQVIPGSVCLKYNEKGMPTGEAMVAFESRDEATAAVIDLNDRPIGSRKVKLVLG</sequence>
<evidence type="ECO:0000250" key="1"/>
<evidence type="ECO:0000250" key="2">
    <source>
        <dbReference type="UniProtKB" id="Q9NTZ6"/>
    </source>
</evidence>
<evidence type="ECO:0000255" key="3">
    <source>
        <dbReference type="PROSITE-ProRule" id="PRU00176"/>
    </source>
</evidence>
<evidence type="ECO:0000256" key="4">
    <source>
        <dbReference type="SAM" id="MobiDB-lite"/>
    </source>
</evidence>
<dbReference type="EMBL" id="AF345333">
    <property type="protein sequence ID" value="AAL83753.1"/>
    <property type="molecule type" value="mRNA"/>
</dbReference>
<dbReference type="RefSeq" id="NP_001028012.1">
    <property type="nucleotide sequence ID" value="NM_001032840.1"/>
</dbReference>
<dbReference type="SMR" id="Q8SQ27"/>
<dbReference type="FunCoup" id="Q8SQ27">
    <property type="interactions" value="2670"/>
</dbReference>
<dbReference type="STRING" id="9544.ENSMMUP00000053163"/>
<dbReference type="Ensembl" id="ENSMMUT00000078457.2">
    <property type="protein sequence ID" value="ENSMMUP00000053163.1"/>
    <property type="gene ID" value="ENSMMUG00000020960.4"/>
</dbReference>
<dbReference type="GeneID" id="574161"/>
<dbReference type="KEGG" id="mcc:574161"/>
<dbReference type="CTD" id="10137"/>
<dbReference type="VEuPathDB" id="HostDB:ENSMMUG00000020960"/>
<dbReference type="eggNOG" id="KOG4307">
    <property type="taxonomic scope" value="Eukaryota"/>
</dbReference>
<dbReference type="GeneTree" id="ENSGT00940000160611"/>
<dbReference type="InParanoid" id="Q8SQ27"/>
<dbReference type="OrthoDB" id="2588702at2759"/>
<dbReference type="Proteomes" id="UP000006718">
    <property type="component" value="Chromosome 10"/>
</dbReference>
<dbReference type="Bgee" id="ENSMMUG00000020960">
    <property type="expression patterns" value="Expressed in ileum and 21 other cell types or tissues"/>
</dbReference>
<dbReference type="ExpressionAtlas" id="Q8SQ27">
    <property type="expression patterns" value="baseline"/>
</dbReference>
<dbReference type="GO" id="GO:0005654">
    <property type="term" value="C:nucleoplasm"/>
    <property type="evidence" value="ECO:0000318"/>
    <property type="project" value="GO_Central"/>
</dbReference>
<dbReference type="GO" id="GO:1990904">
    <property type="term" value="C:ribonucleoprotein complex"/>
    <property type="evidence" value="ECO:0000318"/>
    <property type="project" value="GO_Central"/>
</dbReference>
<dbReference type="GO" id="GO:0003723">
    <property type="term" value="F:RNA binding"/>
    <property type="evidence" value="ECO:0000318"/>
    <property type="project" value="GO_Central"/>
</dbReference>
<dbReference type="GO" id="GO:0043484">
    <property type="term" value="P:regulation of RNA splicing"/>
    <property type="evidence" value="ECO:0000318"/>
    <property type="project" value="GO_Central"/>
</dbReference>
<dbReference type="CDD" id="cd12745">
    <property type="entry name" value="RRM1_RBM12"/>
    <property type="match status" value="1"/>
</dbReference>
<dbReference type="CDD" id="cd12747">
    <property type="entry name" value="RRM2_RBM12"/>
    <property type="match status" value="1"/>
</dbReference>
<dbReference type="CDD" id="cd12512">
    <property type="entry name" value="RRM3_RBM12"/>
    <property type="match status" value="1"/>
</dbReference>
<dbReference type="CDD" id="cd12749">
    <property type="entry name" value="RRM4_RBM12"/>
    <property type="match status" value="1"/>
</dbReference>
<dbReference type="CDD" id="cd12751">
    <property type="entry name" value="RRM5_RBM12"/>
    <property type="match status" value="1"/>
</dbReference>
<dbReference type="FunFam" id="3.30.70.330:FF:000193">
    <property type="entry name" value="RNA-binding motif protein 12"/>
    <property type="match status" value="1"/>
</dbReference>
<dbReference type="FunFam" id="3.30.70.330:FF:000228">
    <property type="entry name" value="RNA-binding motif protein 12"/>
    <property type="match status" value="1"/>
</dbReference>
<dbReference type="FunFam" id="3.30.70.330:FF:000303">
    <property type="entry name" value="RNA-binding motif protein 12"/>
    <property type="match status" value="1"/>
</dbReference>
<dbReference type="FunFam" id="3.30.70.330:FF:000307">
    <property type="entry name" value="RNA-binding motif protein 12"/>
    <property type="match status" value="1"/>
</dbReference>
<dbReference type="FunFam" id="3.30.70.330:FF:000363">
    <property type="entry name" value="RNA-binding motif protein 12"/>
    <property type="match status" value="1"/>
</dbReference>
<dbReference type="Gene3D" id="3.30.70.330">
    <property type="match status" value="5"/>
</dbReference>
<dbReference type="InterPro" id="IPR050666">
    <property type="entry name" value="ESRP"/>
</dbReference>
<dbReference type="InterPro" id="IPR012677">
    <property type="entry name" value="Nucleotide-bd_a/b_plait_sf"/>
</dbReference>
<dbReference type="InterPro" id="IPR035979">
    <property type="entry name" value="RBD_domain_sf"/>
</dbReference>
<dbReference type="InterPro" id="IPR034591">
    <property type="entry name" value="RBM12_RRM1"/>
</dbReference>
<dbReference type="InterPro" id="IPR034594">
    <property type="entry name" value="RBM12_RRM2"/>
</dbReference>
<dbReference type="InterPro" id="IPR034855">
    <property type="entry name" value="RBM12_RRM3"/>
</dbReference>
<dbReference type="InterPro" id="IPR034856">
    <property type="entry name" value="RBM12_RRM4"/>
</dbReference>
<dbReference type="InterPro" id="IPR034854">
    <property type="entry name" value="RBM12_RRM5"/>
</dbReference>
<dbReference type="InterPro" id="IPR000504">
    <property type="entry name" value="RRM_dom"/>
</dbReference>
<dbReference type="PANTHER" id="PTHR13976">
    <property type="entry name" value="HETEROGENEOUS NUCLEAR RIBONUCLEOPROTEIN-RELATED"/>
    <property type="match status" value="1"/>
</dbReference>
<dbReference type="Pfam" id="PF00076">
    <property type="entry name" value="RRM_1"/>
    <property type="match status" value="3"/>
</dbReference>
<dbReference type="SMART" id="SM00360">
    <property type="entry name" value="RRM"/>
    <property type="match status" value="4"/>
</dbReference>
<dbReference type="SUPFAM" id="SSF54928">
    <property type="entry name" value="RNA-binding domain, RBD"/>
    <property type="match status" value="4"/>
</dbReference>
<dbReference type="PROSITE" id="PS50102">
    <property type="entry name" value="RRM"/>
    <property type="match status" value="3"/>
</dbReference>
<name>RBM12_MACMU</name>
<proteinExistence type="evidence at transcript level"/>
<gene>
    <name type="primary">RBM12</name>
</gene>
<comment type="subcellular location">
    <subcellularLocation>
        <location evidence="1">Nucleus</location>
    </subcellularLocation>
</comment>
<feature type="chain" id="PRO_0000081771" description="RNA-binding protein 12">
    <location>
        <begin position="1"/>
        <end position="932"/>
    </location>
</feature>
<feature type="domain" description="RRM 1" evidence="3">
    <location>
        <begin position="304"/>
        <end position="379"/>
    </location>
</feature>
<feature type="domain" description="RRM 2" evidence="3">
    <location>
        <begin position="430"/>
        <end position="507"/>
    </location>
</feature>
<feature type="domain" description="RRM 3" evidence="3">
    <location>
        <begin position="856"/>
        <end position="932"/>
    </location>
</feature>
<feature type="region of interest" description="Disordered" evidence="4">
    <location>
        <begin position="97"/>
        <end position="116"/>
    </location>
</feature>
<feature type="region of interest" description="Disordered" evidence="4">
    <location>
        <begin position="393"/>
        <end position="424"/>
    </location>
</feature>
<feature type="region of interest" description="Disordered" evidence="4">
    <location>
        <begin position="717"/>
        <end position="853"/>
    </location>
</feature>
<feature type="compositionally biased region" description="Low complexity" evidence="4">
    <location>
        <begin position="98"/>
        <end position="116"/>
    </location>
</feature>
<feature type="compositionally biased region" description="Polar residues" evidence="4">
    <location>
        <begin position="408"/>
        <end position="417"/>
    </location>
</feature>
<feature type="compositionally biased region" description="Low complexity" evidence="4">
    <location>
        <begin position="717"/>
        <end position="734"/>
    </location>
</feature>
<feature type="compositionally biased region" description="Gly residues" evidence="4">
    <location>
        <begin position="783"/>
        <end position="811"/>
    </location>
</feature>
<feature type="compositionally biased region" description="Pro residues" evidence="4">
    <location>
        <begin position="824"/>
        <end position="836"/>
    </location>
</feature>
<feature type="modified residue" description="Phosphoserine" evidence="2">
    <location>
        <position position="352"/>
    </location>
</feature>
<feature type="modified residue" description="Phosphoserine" evidence="2">
    <location>
        <position position="375"/>
    </location>
</feature>
<feature type="modified residue" description="Phosphoserine" evidence="2">
    <location>
        <position position="420"/>
    </location>
</feature>
<feature type="modified residue" description="Phosphoserine" evidence="2">
    <location>
        <position position="422"/>
    </location>
</feature>
<feature type="modified residue" description="Phosphoserine" evidence="2">
    <location>
        <position position="424"/>
    </location>
</feature>
<feature type="modified residue" description="Phosphoserine" evidence="2">
    <location>
        <position position="525"/>
    </location>
</feature>
<keyword id="KW-0539">Nucleus</keyword>
<keyword id="KW-0597">Phosphoprotein</keyword>
<keyword id="KW-1185">Reference proteome</keyword>
<keyword id="KW-0677">Repeat</keyword>
<keyword id="KW-0694">RNA-binding</keyword>
<protein>
    <recommendedName>
        <fullName>RNA-binding protein 12</fullName>
    </recommendedName>
    <alternativeName>
        <fullName>RNA-binding motif protein 12</fullName>
    </alternativeName>
    <alternativeName>
        <fullName>SH3/WW domain anchor protein in the nucleus</fullName>
        <shortName>SWAN</shortName>
    </alternativeName>
</protein>
<accession>Q8SQ27</accession>
<organism>
    <name type="scientific">Macaca mulatta</name>
    <name type="common">Rhesus macaque</name>
    <dbReference type="NCBI Taxonomy" id="9544"/>
    <lineage>
        <taxon>Eukaryota</taxon>
        <taxon>Metazoa</taxon>
        <taxon>Chordata</taxon>
        <taxon>Craniata</taxon>
        <taxon>Vertebrata</taxon>
        <taxon>Euteleostomi</taxon>
        <taxon>Mammalia</taxon>
        <taxon>Eutheria</taxon>
        <taxon>Euarchontoglires</taxon>
        <taxon>Primates</taxon>
        <taxon>Haplorrhini</taxon>
        <taxon>Catarrhini</taxon>
        <taxon>Cercopithecidae</taxon>
        <taxon>Cercopithecinae</taxon>
        <taxon>Macaca</taxon>
    </lineage>
</organism>